<organism>
    <name type="scientific">Nitrosospira multiformis (strain ATCC 25196 / NCIMB 11849 / C 71)</name>
    <dbReference type="NCBI Taxonomy" id="323848"/>
    <lineage>
        <taxon>Bacteria</taxon>
        <taxon>Pseudomonadati</taxon>
        <taxon>Pseudomonadota</taxon>
        <taxon>Betaproteobacteria</taxon>
        <taxon>Nitrosomonadales</taxon>
        <taxon>Nitrosomonadaceae</taxon>
        <taxon>Nitrosospira</taxon>
    </lineage>
</organism>
<reference key="1">
    <citation type="submission" date="2005-08" db="EMBL/GenBank/DDBJ databases">
        <title>Complete sequence of chromosome 1 of Nitrosospira multiformis ATCC 25196.</title>
        <authorList>
            <person name="Copeland A."/>
            <person name="Lucas S."/>
            <person name="Lapidus A."/>
            <person name="Barry K."/>
            <person name="Detter J.C."/>
            <person name="Glavina T."/>
            <person name="Hammon N."/>
            <person name="Israni S."/>
            <person name="Pitluck S."/>
            <person name="Chain P."/>
            <person name="Malfatti S."/>
            <person name="Shin M."/>
            <person name="Vergez L."/>
            <person name="Schmutz J."/>
            <person name="Larimer F."/>
            <person name="Land M."/>
            <person name="Hauser L."/>
            <person name="Kyrpides N."/>
            <person name="Lykidis A."/>
            <person name="Richardson P."/>
        </authorList>
    </citation>
    <scope>NUCLEOTIDE SEQUENCE [LARGE SCALE GENOMIC DNA]</scope>
    <source>
        <strain>ATCC 25196 / NCIMB 11849 / C 71</strain>
    </source>
</reference>
<accession>Q2Y981</accession>
<evidence type="ECO:0000255" key="1">
    <source>
        <dbReference type="HAMAP-Rule" id="MF_00165"/>
    </source>
</evidence>
<name>KTHY_NITMU</name>
<sequence>MRGKFITLEGIDGAGKTTHLRWLEYFLKERGKNVMVTREPGGTPLGEALRDILLDSRQTMHAETEALLMFAARREHLDKVILPALSRGEWVISDRFTDASFAYQGGGRGLSLQKLNELECWVQGEFQPDVTLYLDVSIASGRQRTSNIRQADRFEKEQDEFFRRVREAYLERAKEFPERIRVIDANQSLEDVRRSVEKSIATIYA</sequence>
<keyword id="KW-0067">ATP-binding</keyword>
<keyword id="KW-0418">Kinase</keyword>
<keyword id="KW-0545">Nucleotide biosynthesis</keyword>
<keyword id="KW-0547">Nucleotide-binding</keyword>
<keyword id="KW-1185">Reference proteome</keyword>
<keyword id="KW-0808">Transferase</keyword>
<comment type="function">
    <text evidence="1">Phosphorylation of dTMP to form dTDP in both de novo and salvage pathways of dTTP synthesis.</text>
</comment>
<comment type="catalytic activity">
    <reaction evidence="1">
        <text>dTMP + ATP = dTDP + ADP</text>
        <dbReference type="Rhea" id="RHEA:13517"/>
        <dbReference type="ChEBI" id="CHEBI:30616"/>
        <dbReference type="ChEBI" id="CHEBI:58369"/>
        <dbReference type="ChEBI" id="CHEBI:63528"/>
        <dbReference type="ChEBI" id="CHEBI:456216"/>
        <dbReference type="EC" id="2.7.4.9"/>
    </reaction>
</comment>
<comment type="similarity">
    <text evidence="1">Belongs to the thymidylate kinase family.</text>
</comment>
<gene>
    <name evidence="1" type="primary">tmk</name>
    <name type="ordered locus">Nmul_A1387</name>
</gene>
<feature type="chain" id="PRO_1000023236" description="Thymidylate kinase">
    <location>
        <begin position="1"/>
        <end position="205"/>
    </location>
</feature>
<feature type="binding site" evidence="1">
    <location>
        <begin position="10"/>
        <end position="17"/>
    </location>
    <ligand>
        <name>ATP</name>
        <dbReference type="ChEBI" id="CHEBI:30616"/>
    </ligand>
</feature>
<dbReference type="EC" id="2.7.4.9" evidence="1"/>
<dbReference type="EMBL" id="CP000103">
    <property type="protein sequence ID" value="ABB74690.1"/>
    <property type="molecule type" value="Genomic_DNA"/>
</dbReference>
<dbReference type="RefSeq" id="WP_011380726.1">
    <property type="nucleotide sequence ID" value="NC_007614.1"/>
</dbReference>
<dbReference type="SMR" id="Q2Y981"/>
<dbReference type="STRING" id="323848.Nmul_A1387"/>
<dbReference type="KEGG" id="nmu:Nmul_A1387"/>
<dbReference type="eggNOG" id="COG0125">
    <property type="taxonomic scope" value="Bacteria"/>
</dbReference>
<dbReference type="HOGENOM" id="CLU_049131_0_2_4"/>
<dbReference type="OrthoDB" id="9774907at2"/>
<dbReference type="Proteomes" id="UP000002718">
    <property type="component" value="Chromosome"/>
</dbReference>
<dbReference type="GO" id="GO:0005829">
    <property type="term" value="C:cytosol"/>
    <property type="evidence" value="ECO:0007669"/>
    <property type="project" value="TreeGrafter"/>
</dbReference>
<dbReference type="GO" id="GO:0005524">
    <property type="term" value="F:ATP binding"/>
    <property type="evidence" value="ECO:0007669"/>
    <property type="project" value="UniProtKB-UniRule"/>
</dbReference>
<dbReference type="GO" id="GO:0004798">
    <property type="term" value="F:dTMP kinase activity"/>
    <property type="evidence" value="ECO:0007669"/>
    <property type="project" value="UniProtKB-UniRule"/>
</dbReference>
<dbReference type="GO" id="GO:0006233">
    <property type="term" value="P:dTDP biosynthetic process"/>
    <property type="evidence" value="ECO:0007669"/>
    <property type="project" value="InterPro"/>
</dbReference>
<dbReference type="GO" id="GO:0006235">
    <property type="term" value="P:dTTP biosynthetic process"/>
    <property type="evidence" value="ECO:0007669"/>
    <property type="project" value="UniProtKB-UniRule"/>
</dbReference>
<dbReference type="GO" id="GO:0006227">
    <property type="term" value="P:dUDP biosynthetic process"/>
    <property type="evidence" value="ECO:0007669"/>
    <property type="project" value="TreeGrafter"/>
</dbReference>
<dbReference type="CDD" id="cd01672">
    <property type="entry name" value="TMPK"/>
    <property type="match status" value="1"/>
</dbReference>
<dbReference type="FunFam" id="3.40.50.300:FF:000225">
    <property type="entry name" value="Thymidylate kinase"/>
    <property type="match status" value="1"/>
</dbReference>
<dbReference type="Gene3D" id="3.40.50.300">
    <property type="entry name" value="P-loop containing nucleotide triphosphate hydrolases"/>
    <property type="match status" value="1"/>
</dbReference>
<dbReference type="HAMAP" id="MF_00165">
    <property type="entry name" value="Thymidylate_kinase"/>
    <property type="match status" value="1"/>
</dbReference>
<dbReference type="InterPro" id="IPR027417">
    <property type="entry name" value="P-loop_NTPase"/>
</dbReference>
<dbReference type="InterPro" id="IPR039430">
    <property type="entry name" value="Thymidylate_kin-like_dom"/>
</dbReference>
<dbReference type="InterPro" id="IPR018094">
    <property type="entry name" value="Thymidylate_kinase"/>
</dbReference>
<dbReference type="NCBIfam" id="TIGR00041">
    <property type="entry name" value="DTMP_kinase"/>
    <property type="match status" value="1"/>
</dbReference>
<dbReference type="PANTHER" id="PTHR10344">
    <property type="entry name" value="THYMIDYLATE KINASE"/>
    <property type="match status" value="1"/>
</dbReference>
<dbReference type="PANTHER" id="PTHR10344:SF4">
    <property type="entry name" value="UMP-CMP KINASE 2, MITOCHONDRIAL"/>
    <property type="match status" value="1"/>
</dbReference>
<dbReference type="Pfam" id="PF02223">
    <property type="entry name" value="Thymidylate_kin"/>
    <property type="match status" value="1"/>
</dbReference>
<dbReference type="SUPFAM" id="SSF52540">
    <property type="entry name" value="P-loop containing nucleoside triphosphate hydrolases"/>
    <property type="match status" value="1"/>
</dbReference>
<protein>
    <recommendedName>
        <fullName evidence="1">Thymidylate kinase</fullName>
        <ecNumber evidence="1">2.7.4.9</ecNumber>
    </recommendedName>
    <alternativeName>
        <fullName evidence="1">dTMP kinase</fullName>
    </alternativeName>
</protein>
<proteinExistence type="inferred from homology"/>